<protein>
    <recommendedName>
        <fullName evidence="1">tRNA (guanine-N(1)-)-methyltransferase</fullName>
        <ecNumber evidence="1">2.1.1.228</ecNumber>
    </recommendedName>
    <alternativeName>
        <fullName evidence="1">M1G-methyltransferase</fullName>
    </alternativeName>
    <alternativeName>
        <fullName evidence="1">tRNA [GM37] methyltransferase</fullName>
    </alternativeName>
</protein>
<accession>Q319K9</accession>
<feature type="chain" id="PRO_0000257447" description="tRNA (guanine-N(1)-)-methyltransferase">
    <location>
        <begin position="1"/>
        <end position="245"/>
    </location>
</feature>
<feature type="binding site" evidence="1">
    <location>
        <position position="114"/>
    </location>
    <ligand>
        <name>S-adenosyl-L-methionine</name>
        <dbReference type="ChEBI" id="CHEBI:59789"/>
    </ligand>
</feature>
<feature type="binding site" evidence="1">
    <location>
        <begin position="133"/>
        <end position="138"/>
    </location>
    <ligand>
        <name>S-adenosyl-L-methionine</name>
        <dbReference type="ChEBI" id="CHEBI:59789"/>
    </ligand>
</feature>
<organism>
    <name type="scientific">Prochlorococcus marinus (strain MIT 9312)</name>
    <dbReference type="NCBI Taxonomy" id="74546"/>
    <lineage>
        <taxon>Bacteria</taxon>
        <taxon>Bacillati</taxon>
        <taxon>Cyanobacteriota</taxon>
        <taxon>Cyanophyceae</taxon>
        <taxon>Synechococcales</taxon>
        <taxon>Prochlorococcaceae</taxon>
        <taxon>Prochlorococcus</taxon>
    </lineage>
</organism>
<sequence>MNSFNIDVITLLPKAFELIKNLGVITRALDKNLINVNLHDLREYGEGSYRQVDDKPYGGGAGMVLKPGPIFKAHESINKFPKSKTLLMTPQGKVLKQKDFVRWSTLDQIIIICGQYEGFDERVRCLADEEISIGDYVLSGGEIPALSIINGLTRLLPGTLGDPDSLVNESHNSPLLEHPQYTRPQIFRDMKVPDVLINGNHKEIELWREERMLKRTIKRRKDLIKNEFCDLPIDEYDGDDWLWDL</sequence>
<keyword id="KW-0963">Cytoplasm</keyword>
<keyword id="KW-0489">Methyltransferase</keyword>
<keyword id="KW-0949">S-adenosyl-L-methionine</keyword>
<keyword id="KW-0808">Transferase</keyword>
<keyword id="KW-0819">tRNA processing</keyword>
<dbReference type="EC" id="2.1.1.228" evidence="1"/>
<dbReference type="EMBL" id="CP000111">
    <property type="protein sequence ID" value="ABB50436.1"/>
    <property type="molecule type" value="Genomic_DNA"/>
</dbReference>
<dbReference type="RefSeq" id="WP_011376922.1">
    <property type="nucleotide sequence ID" value="NC_007577.1"/>
</dbReference>
<dbReference type="SMR" id="Q319K9"/>
<dbReference type="STRING" id="74546.PMT9312_1376"/>
<dbReference type="KEGG" id="pmi:PMT9312_1376"/>
<dbReference type="eggNOG" id="COG0336">
    <property type="taxonomic scope" value="Bacteria"/>
</dbReference>
<dbReference type="HOGENOM" id="CLU_047363_0_1_3"/>
<dbReference type="OrthoDB" id="9807416at2"/>
<dbReference type="Proteomes" id="UP000002715">
    <property type="component" value="Chromosome"/>
</dbReference>
<dbReference type="GO" id="GO:0005829">
    <property type="term" value="C:cytosol"/>
    <property type="evidence" value="ECO:0007669"/>
    <property type="project" value="TreeGrafter"/>
</dbReference>
<dbReference type="GO" id="GO:0052906">
    <property type="term" value="F:tRNA (guanine(37)-N1)-methyltransferase activity"/>
    <property type="evidence" value="ECO:0007669"/>
    <property type="project" value="UniProtKB-UniRule"/>
</dbReference>
<dbReference type="GO" id="GO:0002939">
    <property type="term" value="P:tRNA N1-guanine methylation"/>
    <property type="evidence" value="ECO:0007669"/>
    <property type="project" value="TreeGrafter"/>
</dbReference>
<dbReference type="CDD" id="cd18080">
    <property type="entry name" value="TrmD-like"/>
    <property type="match status" value="1"/>
</dbReference>
<dbReference type="Gene3D" id="3.40.1280.10">
    <property type="match status" value="1"/>
</dbReference>
<dbReference type="Gene3D" id="1.10.1270.20">
    <property type="entry name" value="tRNA(m1g37)methyltransferase, domain 2"/>
    <property type="match status" value="1"/>
</dbReference>
<dbReference type="HAMAP" id="MF_00605">
    <property type="entry name" value="TrmD"/>
    <property type="match status" value="1"/>
</dbReference>
<dbReference type="InterPro" id="IPR029028">
    <property type="entry name" value="Alpha/beta_knot_MTases"/>
</dbReference>
<dbReference type="InterPro" id="IPR023148">
    <property type="entry name" value="tRNA_m1G_MeTrfase_C_sf"/>
</dbReference>
<dbReference type="InterPro" id="IPR002649">
    <property type="entry name" value="tRNA_m1G_MeTrfase_TrmD"/>
</dbReference>
<dbReference type="InterPro" id="IPR029026">
    <property type="entry name" value="tRNA_m1G_MTases_N"/>
</dbReference>
<dbReference type="InterPro" id="IPR016009">
    <property type="entry name" value="tRNA_MeTrfase_TRMD/TRM10"/>
</dbReference>
<dbReference type="NCBIfam" id="NF000648">
    <property type="entry name" value="PRK00026.1"/>
    <property type="match status" value="1"/>
</dbReference>
<dbReference type="NCBIfam" id="TIGR00088">
    <property type="entry name" value="trmD"/>
    <property type="match status" value="1"/>
</dbReference>
<dbReference type="PANTHER" id="PTHR46417">
    <property type="entry name" value="TRNA (GUANINE-N(1)-)-METHYLTRANSFERASE"/>
    <property type="match status" value="1"/>
</dbReference>
<dbReference type="PANTHER" id="PTHR46417:SF1">
    <property type="entry name" value="TRNA (GUANINE-N(1)-)-METHYLTRANSFERASE"/>
    <property type="match status" value="1"/>
</dbReference>
<dbReference type="Pfam" id="PF01746">
    <property type="entry name" value="tRNA_m1G_MT"/>
    <property type="match status" value="1"/>
</dbReference>
<dbReference type="PIRSF" id="PIRSF000386">
    <property type="entry name" value="tRNA_mtase"/>
    <property type="match status" value="1"/>
</dbReference>
<dbReference type="SUPFAM" id="SSF75217">
    <property type="entry name" value="alpha/beta knot"/>
    <property type="match status" value="1"/>
</dbReference>
<proteinExistence type="inferred from homology"/>
<comment type="function">
    <text evidence="1">Specifically methylates guanosine-37 in various tRNAs.</text>
</comment>
<comment type="catalytic activity">
    <reaction evidence="1">
        <text>guanosine(37) in tRNA + S-adenosyl-L-methionine = N(1)-methylguanosine(37) in tRNA + S-adenosyl-L-homocysteine + H(+)</text>
        <dbReference type="Rhea" id="RHEA:36899"/>
        <dbReference type="Rhea" id="RHEA-COMP:10145"/>
        <dbReference type="Rhea" id="RHEA-COMP:10147"/>
        <dbReference type="ChEBI" id="CHEBI:15378"/>
        <dbReference type="ChEBI" id="CHEBI:57856"/>
        <dbReference type="ChEBI" id="CHEBI:59789"/>
        <dbReference type="ChEBI" id="CHEBI:73542"/>
        <dbReference type="ChEBI" id="CHEBI:74269"/>
        <dbReference type="EC" id="2.1.1.228"/>
    </reaction>
</comment>
<comment type="subunit">
    <text evidence="1">Homodimer.</text>
</comment>
<comment type="subcellular location">
    <subcellularLocation>
        <location evidence="1">Cytoplasm</location>
    </subcellularLocation>
</comment>
<comment type="similarity">
    <text evidence="1">Belongs to the RNA methyltransferase TrmD family.</text>
</comment>
<evidence type="ECO:0000255" key="1">
    <source>
        <dbReference type="HAMAP-Rule" id="MF_00605"/>
    </source>
</evidence>
<name>TRMD_PROM9</name>
<gene>
    <name evidence="1" type="primary">trmD</name>
    <name type="ordered locus">PMT9312_1376</name>
</gene>
<reference key="1">
    <citation type="journal article" date="2006" name="Science">
        <title>Genomic islands and the ecology and evolution of Prochlorococcus.</title>
        <authorList>
            <person name="Coleman M.L."/>
            <person name="Sullivan M.B."/>
            <person name="Martiny A.C."/>
            <person name="Steglich C."/>
            <person name="Barry K."/>
            <person name="Delong E.F."/>
            <person name="Chisholm S.W."/>
        </authorList>
    </citation>
    <scope>NUCLEOTIDE SEQUENCE [LARGE SCALE GENOMIC DNA]</scope>
    <source>
        <strain>MIT 9312</strain>
    </source>
</reference>